<protein>
    <recommendedName>
        <fullName evidence="1">Peptide chain release factor 3</fullName>
        <shortName evidence="1">RF-3</shortName>
    </recommendedName>
</protein>
<sequence length="539" mass="61019">MSSELQTEIQEAVEKRRNFAIISHPDAGKTTLTEKLLLYGGAIHQAGAVKARRDQRKATSDWMEMEKQRGISITSTVLQFEYRNFQINLLDTPGHQDFSEDTYRTLAAADNAVMLIDAAKGLEPQTRKLFEVCRLRGLPIFTFINKLDRPTREPLELLDEIEQELGLKTYAVNWPIGTGDRFKGVFDRRHQGIHLFERRAHGSQQAQETAIKLGDPKIEAHLEQELYYQLKEELEILQELGGDLDLKELHDGQITPVFFGSAMTNFGVQLFLEAFLEYALQPEGRNSSVGVVDPTHPEFSGFVFKLQANMDPKHRDRVAFVRVCTGKFEKDMTVSHARTGKTVRLSRPQKLFAQDRESIEEAYGGDVIGLNNPGVFAIGDTIYSGTKLEYEGIPCFSPEIFAYLKNPNPSKFKQFQKGIQELREEGAIQIMYSTDDFKRDPILAAVGQLQFEVVQFRMLSEYGVETNLEPLPYSVARWVTGGWTALEKAGRIFNSMTVKDNWDRPVLLFKNEWNLNQVKADKPELGLSSTAPVGSGINE</sequence>
<comment type="function">
    <text evidence="1">Increases the formation of ribosomal termination complexes and stimulates activities of RF-1 and RF-2. It binds guanine nucleotides and has strong preference for UGA stop codons. It may interact directly with the ribosome. The stimulation of RF-1 and RF-2 is significantly reduced by GTP and GDP, but not by GMP.</text>
</comment>
<comment type="subcellular location">
    <subcellularLocation>
        <location evidence="1">Cytoplasm</location>
    </subcellularLocation>
</comment>
<comment type="similarity">
    <text evidence="1">Belongs to the TRAFAC class translation factor GTPase superfamily. Classic translation factor GTPase family. PrfC subfamily.</text>
</comment>
<dbReference type="EMBL" id="CP001287">
    <property type="protein sequence ID" value="ACK66036.1"/>
    <property type="molecule type" value="Genomic_DNA"/>
</dbReference>
<dbReference type="RefSeq" id="WP_012595306.1">
    <property type="nucleotide sequence ID" value="NC_011726.1"/>
</dbReference>
<dbReference type="SMR" id="B7JYV9"/>
<dbReference type="STRING" id="41431.PCC8801_1999"/>
<dbReference type="KEGG" id="cyp:PCC8801_1999"/>
<dbReference type="eggNOG" id="COG4108">
    <property type="taxonomic scope" value="Bacteria"/>
</dbReference>
<dbReference type="HOGENOM" id="CLU_002794_2_1_3"/>
<dbReference type="OrthoDB" id="580826at2"/>
<dbReference type="Proteomes" id="UP000008204">
    <property type="component" value="Chromosome"/>
</dbReference>
<dbReference type="GO" id="GO:0005829">
    <property type="term" value="C:cytosol"/>
    <property type="evidence" value="ECO:0007669"/>
    <property type="project" value="TreeGrafter"/>
</dbReference>
<dbReference type="GO" id="GO:0005525">
    <property type="term" value="F:GTP binding"/>
    <property type="evidence" value="ECO:0007669"/>
    <property type="project" value="UniProtKB-UniRule"/>
</dbReference>
<dbReference type="GO" id="GO:0003924">
    <property type="term" value="F:GTPase activity"/>
    <property type="evidence" value="ECO:0007669"/>
    <property type="project" value="InterPro"/>
</dbReference>
<dbReference type="GO" id="GO:0016150">
    <property type="term" value="F:translation release factor activity, codon nonspecific"/>
    <property type="evidence" value="ECO:0007669"/>
    <property type="project" value="TreeGrafter"/>
</dbReference>
<dbReference type="GO" id="GO:0016149">
    <property type="term" value="F:translation release factor activity, codon specific"/>
    <property type="evidence" value="ECO:0007669"/>
    <property type="project" value="UniProtKB-UniRule"/>
</dbReference>
<dbReference type="GO" id="GO:0006449">
    <property type="term" value="P:regulation of translational termination"/>
    <property type="evidence" value="ECO:0007669"/>
    <property type="project" value="UniProtKB-UniRule"/>
</dbReference>
<dbReference type="CDD" id="cd04169">
    <property type="entry name" value="RF3"/>
    <property type="match status" value="1"/>
</dbReference>
<dbReference type="CDD" id="cd03689">
    <property type="entry name" value="RF3_II"/>
    <property type="match status" value="1"/>
</dbReference>
<dbReference type="FunFam" id="2.40.30.10:FF:000040">
    <property type="entry name" value="Peptide chain release factor 3"/>
    <property type="match status" value="1"/>
</dbReference>
<dbReference type="FunFam" id="3.30.70.3280:FF:000001">
    <property type="entry name" value="Peptide chain release factor 3"/>
    <property type="match status" value="1"/>
</dbReference>
<dbReference type="FunFam" id="3.40.50.300:FF:000542">
    <property type="entry name" value="Peptide chain release factor 3"/>
    <property type="match status" value="1"/>
</dbReference>
<dbReference type="Gene3D" id="3.40.50.300">
    <property type="entry name" value="P-loop containing nucleotide triphosphate hydrolases"/>
    <property type="match status" value="1"/>
</dbReference>
<dbReference type="Gene3D" id="3.30.70.3280">
    <property type="entry name" value="Peptide chain release factor 3, domain III"/>
    <property type="match status" value="1"/>
</dbReference>
<dbReference type="Gene3D" id="2.40.30.10">
    <property type="entry name" value="Translation factors"/>
    <property type="match status" value="1"/>
</dbReference>
<dbReference type="HAMAP" id="MF_00072">
    <property type="entry name" value="Rel_fac_3"/>
    <property type="match status" value="1"/>
</dbReference>
<dbReference type="InterPro" id="IPR053905">
    <property type="entry name" value="EF-G-like_DII"/>
</dbReference>
<dbReference type="InterPro" id="IPR035647">
    <property type="entry name" value="EFG_III/V"/>
</dbReference>
<dbReference type="InterPro" id="IPR031157">
    <property type="entry name" value="G_TR_CS"/>
</dbReference>
<dbReference type="InterPro" id="IPR027417">
    <property type="entry name" value="P-loop_NTPase"/>
</dbReference>
<dbReference type="InterPro" id="IPR004548">
    <property type="entry name" value="PrfC"/>
</dbReference>
<dbReference type="InterPro" id="IPR032090">
    <property type="entry name" value="RF3_C"/>
</dbReference>
<dbReference type="InterPro" id="IPR038467">
    <property type="entry name" value="RF3_dom_3_sf"/>
</dbReference>
<dbReference type="InterPro" id="IPR041732">
    <property type="entry name" value="RF3_GTP-bd"/>
</dbReference>
<dbReference type="InterPro" id="IPR005225">
    <property type="entry name" value="Small_GTP-bd"/>
</dbReference>
<dbReference type="InterPro" id="IPR000795">
    <property type="entry name" value="T_Tr_GTP-bd_dom"/>
</dbReference>
<dbReference type="InterPro" id="IPR009000">
    <property type="entry name" value="Transl_B-barrel_sf"/>
</dbReference>
<dbReference type="NCBIfam" id="TIGR00503">
    <property type="entry name" value="prfC"/>
    <property type="match status" value="1"/>
</dbReference>
<dbReference type="NCBIfam" id="NF001964">
    <property type="entry name" value="PRK00741.1"/>
    <property type="match status" value="1"/>
</dbReference>
<dbReference type="NCBIfam" id="TIGR00231">
    <property type="entry name" value="small_GTP"/>
    <property type="match status" value="1"/>
</dbReference>
<dbReference type="PANTHER" id="PTHR43556">
    <property type="entry name" value="PEPTIDE CHAIN RELEASE FACTOR RF3"/>
    <property type="match status" value="1"/>
</dbReference>
<dbReference type="PANTHER" id="PTHR43556:SF2">
    <property type="entry name" value="PEPTIDE CHAIN RELEASE FACTOR RF3"/>
    <property type="match status" value="1"/>
</dbReference>
<dbReference type="Pfam" id="PF22042">
    <property type="entry name" value="EF-G_D2"/>
    <property type="match status" value="1"/>
</dbReference>
<dbReference type="Pfam" id="PF00009">
    <property type="entry name" value="GTP_EFTU"/>
    <property type="match status" value="1"/>
</dbReference>
<dbReference type="Pfam" id="PF16658">
    <property type="entry name" value="RF3_C"/>
    <property type="match status" value="1"/>
</dbReference>
<dbReference type="PRINTS" id="PR00315">
    <property type="entry name" value="ELONGATNFCT"/>
</dbReference>
<dbReference type="SUPFAM" id="SSF54980">
    <property type="entry name" value="EF-G C-terminal domain-like"/>
    <property type="match status" value="1"/>
</dbReference>
<dbReference type="SUPFAM" id="SSF52540">
    <property type="entry name" value="P-loop containing nucleoside triphosphate hydrolases"/>
    <property type="match status" value="1"/>
</dbReference>
<dbReference type="SUPFAM" id="SSF50447">
    <property type="entry name" value="Translation proteins"/>
    <property type="match status" value="1"/>
</dbReference>
<dbReference type="PROSITE" id="PS00301">
    <property type="entry name" value="G_TR_1"/>
    <property type="match status" value="1"/>
</dbReference>
<dbReference type="PROSITE" id="PS51722">
    <property type="entry name" value="G_TR_2"/>
    <property type="match status" value="1"/>
</dbReference>
<keyword id="KW-0963">Cytoplasm</keyword>
<keyword id="KW-0342">GTP-binding</keyword>
<keyword id="KW-0547">Nucleotide-binding</keyword>
<keyword id="KW-0648">Protein biosynthesis</keyword>
<keyword id="KW-1185">Reference proteome</keyword>
<proteinExistence type="inferred from homology"/>
<feature type="chain" id="PRO_1000193518" description="Peptide chain release factor 3">
    <location>
        <begin position="1"/>
        <end position="539"/>
    </location>
</feature>
<feature type="domain" description="tr-type G">
    <location>
        <begin position="14"/>
        <end position="283"/>
    </location>
</feature>
<feature type="binding site" evidence="1">
    <location>
        <begin position="23"/>
        <end position="30"/>
    </location>
    <ligand>
        <name>GTP</name>
        <dbReference type="ChEBI" id="CHEBI:37565"/>
    </ligand>
</feature>
<feature type="binding site" evidence="1">
    <location>
        <begin position="91"/>
        <end position="95"/>
    </location>
    <ligand>
        <name>GTP</name>
        <dbReference type="ChEBI" id="CHEBI:37565"/>
    </ligand>
</feature>
<feature type="binding site" evidence="1">
    <location>
        <begin position="145"/>
        <end position="148"/>
    </location>
    <ligand>
        <name>GTP</name>
        <dbReference type="ChEBI" id="CHEBI:37565"/>
    </ligand>
</feature>
<accession>B7JYV9</accession>
<reference key="1">
    <citation type="journal article" date="2011" name="MBio">
        <title>Novel metabolic attributes of the genus Cyanothece, comprising a group of unicellular nitrogen-fixing Cyanobacteria.</title>
        <authorList>
            <person name="Bandyopadhyay A."/>
            <person name="Elvitigala T."/>
            <person name="Welsh E."/>
            <person name="Stockel J."/>
            <person name="Liberton M."/>
            <person name="Min H."/>
            <person name="Sherman L.A."/>
            <person name="Pakrasi H.B."/>
        </authorList>
    </citation>
    <scope>NUCLEOTIDE SEQUENCE [LARGE SCALE GENOMIC DNA]</scope>
    <source>
        <strain>PCC 8801 / RF-1</strain>
    </source>
</reference>
<evidence type="ECO:0000255" key="1">
    <source>
        <dbReference type="HAMAP-Rule" id="MF_00072"/>
    </source>
</evidence>
<organism>
    <name type="scientific">Rippkaea orientalis (strain PCC 8801 / RF-1)</name>
    <name type="common">Cyanothece sp. (strain PCC 8801)</name>
    <dbReference type="NCBI Taxonomy" id="41431"/>
    <lineage>
        <taxon>Bacteria</taxon>
        <taxon>Bacillati</taxon>
        <taxon>Cyanobacteriota</taxon>
        <taxon>Cyanophyceae</taxon>
        <taxon>Oscillatoriophycideae</taxon>
        <taxon>Chroococcales</taxon>
        <taxon>Aphanothecaceae</taxon>
        <taxon>Rippkaea</taxon>
        <taxon>Rippkaea orientalis</taxon>
    </lineage>
</organism>
<gene>
    <name evidence="1" type="primary">prfC</name>
    <name type="ordered locus">PCC8801_1999</name>
</gene>
<name>RF3_RIPO1</name>